<comment type="function">
    <text evidence="1">H(+)-stimulated, divalent metal cation uptake system.</text>
</comment>
<comment type="subcellular location">
    <subcellularLocation>
        <location evidence="1">Cell membrane</location>
        <topology evidence="1">Multi-pass membrane protein</topology>
    </subcellularLocation>
</comment>
<comment type="similarity">
    <text evidence="1">Belongs to the NRAMP family.</text>
</comment>
<organism>
    <name type="scientific">Listeria monocytogenes serovar 1/2a (strain ATCC BAA-679 / EGD-e)</name>
    <dbReference type="NCBI Taxonomy" id="169963"/>
    <lineage>
        <taxon>Bacteria</taxon>
        <taxon>Bacillati</taxon>
        <taxon>Bacillota</taxon>
        <taxon>Bacilli</taxon>
        <taxon>Bacillales</taxon>
        <taxon>Listeriaceae</taxon>
        <taxon>Listeria</taxon>
    </lineage>
</organism>
<sequence length="448" mass="48623">MKKDKTERTKQSWRKAQNAPSLSEVNNSVAIPKNAKFFRKLFAFMGPGALIAVGYVDPGNWATSIAGGSEFGYTLLSVILISNILAVLLQSLASKLGIVTGRDLAQASSDHFSKPFGFVLWILAELAIIATDIAEVIGSAIALNLLFGIPLIWGVCITALDIFLVLFLQHKGFRYIEVIVITLMVTILVCFGAEMVMSHPDMQAIAKGFIPQSEIVTNPAMLYIALGILGATVMPHNLYLHSSIVQTRQYARTKEGKKEAIRFSFIDSTFSLTIALLINASILILAAAAFYTTGQHNVAGIEDAYKLLNPTLGSSIASTVFAVALLASGQNSTLTGTLAGQIVMEGFLNIRLKPVVRRLLTRVLAIVPAVIITALYGANGINELLIFSQVILSMQLSFAVIPLVMFTSDKQKMGEFVNPTWLKIISWAVAIFIAVLNIYLLFYTLTSL</sequence>
<evidence type="ECO:0000255" key="1">
    <source>
        <dbReference type="HAMAP-Rule" id="MF_00221"/>
    </source>
</evidence>
<evidence type="ECO:0000256" key="2">
    <source>
        <dbReference type="SAM" id="MobiDB-lite"/>
    </source>
</evidence>
<protein>
    <recommendedName>
        <fullName evidence="1">Divalent metal cation transporter MntH</fullName>
    </recommendedName>
</protein>
<proteinExistence type="inferred from homology"/>
<accession>Q8Y773</accession>
<name>MNTH_LISMO</name>
<feature type="chain" id="PRO_0000212624" description="Divalent metal cation transporter MntH">
    <location>
        <begin position="1"/>
        <end position="448"/>
    </location>
</feature>
<feature type="transmembrane region" description="Helical" evidence="1">
    <location>
        <begin position="41"/>
        <end position="61"/>
    </location>
</feature>
<feature type="transmembrane region" description="Helical" evidence="1">
    <location>
        <begin position="69"/>
        <end position="89"/>
    </location>
</feature>
<feature type="transmembrane region" description="Helical" evidence="1">
    <location>
        <begin position="117"/>
        <end position="137"/>
    </location>
</feature>
<feature type="transmembrane region" description="Helical" evidence="1">
    <location>
        <begin position="147"/>
        <end position="167"/>
    </location>
</feature>
<feature type="transmembrane region" description="Helical" evidence="1">
    <location>
        <begin position="176"/>
        <end position="196"/>
    </location>
</feature>
<feature type="transmembrane region" description="Helical" evidence="1">
    <location>
        <begin position="215"/>
        <end position="235"/>
    </location>
</feature>
<feature type="transmembrane region" description="Helical" evidence="1">
    <location>
        <begin position="270"/>
        <end position="290"/>
    </location>
</feature>
<feature type="transmembrane region" description="Helical" evidence="1">
    <location>
        <begin position="307"/>
        <end position="327"/>
    </location>
</feature>
<feature type="transmembrane region" description="Helical" evidence="1">
    <location>
        <begin position="363"/>
        <end position="383"/>
    </location>
</feature>
<feature type="transmembrane region" description="Helical" evidence="1">
    <location>
        <begin position="384"/>
        <end position="404"/>
    </location>
</feature>
<feature type="transmembrane region" description="Helical" evidence="1">
    <location>
        <begin position="424"/>
        <end position="444"/>
    </location>
</feature>
<feature type="region of interest" description="Disordered" evidence="2">
    <location>
        <begin position="1"/>
        <end position="20"/>
    </location>
</feature>
<feature type="compositionally biased region" description="Basic and acidic residues" evidence="2">
    <location>
        <begin position="1"/>
        <end position="10"/>
    </location>
</feature>
<keyword id="KW-1003">Cell membrane</keyword>
<keyword id="KW-0406">Ion transport</keyword>
<keyword id="KW-0472">Membrane</keyword>
<keyword id="KW-1185">Reference proteome</keyword>
<keyword id="KW-0769">Symport</keyword>
<keyword id="KW-0812">Transmembrane</keyword>
<keyword id="KW-1133">Transmembrane helix</keyword>
<keyword id="KW-0813">Transport</keyword>
<gene>
    <name evidence="1" type="primary">mntH</name>
    <name type="ordered locus">lmo1424</name>
</gene>
<dbReference type="EMBL" id="AL591979">
    <property type="protein sequence ID" value="CAC99502.1"/>
    <property type="molecule type" value="Genomic_DNA"/>
</dbReference>
<dbReference type="PIR" id="AH1252">
    <property type="entry name" value="AH1252"/>
</dbReference>
<dbReference type="RefSeq" id="NP_464949.1">
    <property type="nucleotide sequence ID" value="NC_003210.1"/>
</dbReference>
<dbReference type="RefSeq" id="WP_003721929.1">
    <property type="nucleotide sequence ID" value="NZ_CP149495.1"/>
</dbReference>
<dbReference type="SMR" id="Q8Y773"/>
<dbReference type="STRING" id="169963.gene:17594081"/>
<dbReference type="PaxDb" id="169963-lmo1424"/>
<dbReference type="EnsemblBacteria" id="CAC99502">
    <property type="protein sequence ID" value="CAC99502"/>
    <property type="gene ID" value="CAC99502"/>
</dbReference>
<dbReference type="GeneID" id="986818"/>
<dbReference type="KEGG" id="lmo:lmo1424"/>
<dbReference type="PATRIC" id="fig|169963.11.peg.1463"/>
<dbReference type="eggNOG" id="COG1914">
    <property type="taxonomic scope" value="Bacteria"/>
</dbReference>
<dbReference type="HOGENOM" id="CLU_020088_2_0_9"/>
<dbReference type="OrthoDB" id="9787548at2"/>
<dbReference type="PhylomeDB" id="Q8Y773"/>
<dbReference type="BioCyc" id="LMON169963:LMO1424-MONOMER"/>
<dbReference type="Proteomes" id="UP000000817">
    <property type="component" value="Chromosome"/>
</dbReference>
<dbReference type="GO" id="GO:0005886">
    <property type="term" value="C:plasma membrane"/>
    <property type="evidence" value="ECO:0000318"/>
    <property type="project" value="GO_Central"/>
</dbReference>
<dbReference type="GO" id="GO:0015086">
    <property type="term" value="F:cadmium ion transmembrane transporter activity"/>
    <property type="evidence" value="ECO:0000318"/>
    <property type="project" value="GO_Central"/>
</dbReference>
<dbReference type="GO" id="GO:0005384">
    <property type="term" value="F:manganese ion transmembrane transporter activity"/>
    <property type="evidence" value="ECO:0000318"/>
    <property type="project" value="GO_Central"/>
</dbReference>
<dbReference type="GO" id="GO:0046872">
    <property type="term" value="F:metal ion binding"/>
    <property type="evidence" value="ECO:0007669"/>
    <property type="project" value="UniProtKB-UniRule"/>
</dbReference>
<dbReference type="GO" id="GO:0015293">
    <property type="term" value="F:symporter activity"/>
    <property type="evidence" value="ECO:0007669"/>
    <property type="project" value="UniProtKB-UniRule"/>
</dbReference>
<dbReference type="GO" id="GO:0034755">
    <property type="term" value="P:iron ion transmembrane transport"/>
    <property type="evidence" value="ECO:0000318"/>
    <property type="project" value="GO_Central"/>
</dbReference>
<dbReference type="GO" id="GO:0006828">
    <property type="term" value="P:manganese ion transport"/>
    <property type="evidence" value="ECO:0000318"/>
    <property type="project" value="GO_Central"/>
</dbReference>
<dbReference type="HAMAP" id="MF_00221">
    <property type="entry name" value="NRAMP"/>
    <property type="match status" value="1"/>
</dbReference>
<dbReference type="InterPro" id="IPR001046">
    <property type="entry name" value="NRAMP_fam"/>
</dbReference>
<dbReference type="NCBIfam" id="TIGR01197">
    <property type="entry name" value="nramp"/>
    <property type="match status" value="1"/>
</dbReference>
<dbReference type="NCBIfam" id="NF037982">
    <property type="entry name" value="Nramp_1"/>
    <property type="match status" value="1"/>
</dbReference>
<dbReference type="NCBIfam" id="NF001923">
    <property type="entry name" value="PRK00701.1"/>
    <property type="match status" value="1"/>
</dbReference>
<dbReference type="PANTHER" id="PTHR11706:SF33">
    <property type="entry name" value="NATURAL RESISTANCE-ASSOCIATED MACROPHAGE PROTEIN 2"/>
    <property type="match status" value="1"/>
</dbReference>
<dbReference type="PANTHER" id="PTHR11706">
    <property type="entry name" value="SOLUTE CARRIER PROTEIN FAMILY 11 MEMBER"/>
    <property type="match status" value="1"/>
</dbReference>
<dbReference type="Pfam" id="PF01566">
    <property type="entry name" value="Nramp"/>
    <property type="match status" value="1"/>
</dbReference>
<dbReference type="PRINTS" id="PR00447">
    <property type="entry name" value="NATRESASSCMP"/>
</dbReference>
<reference key="1">
    <citation type="journal article" date="2001" name="Science">
        <title>Comparative genomics of Listeria species.</title>
        <authorList>
            <person name="Glaser P."/>
            <person name="Frangeul L."/>
            <person name="Buchrieser C."/>
            <person name="Rusniok C."/>
            <person name="Amend A."/>
            <person name="Baquero F."/>
            <person name="Berche P."/>
            <person name="Bloecker H."/>
            <person name="Brandt P."/>
            <person name="Chakraborty T."/>
            <person name="Charbit A."/>
            <person name="Chetouani F."/>
            <person name="Couve E."/>
            <person name="de Daruvar A."/>
            <person name="Dehoux P."/>
            <person name="Domann E."/>
            <person name="Dominguez-Bernal G."/>
            <person name="Duchaud E."/>
            <person name="Durant L."/>
            <person name="Dussurget O."/>
            <person name="Entian K.-D."/>
            <person name="Fsihi H."/>
            <person name="Garcia-del Portillo F."/>
            <person name="Garrido P."/>
            <person name="Gautier L."/>
            <person name="Goebel W."/>
            <person name="Gomez-Lopez N."/>
            <person name="Hain T."/>
            <person name="Hauf J."/>
            <person name="Jackson D."/>
            <person name="Jones L.-M."/>
            <person name="Kaerst U."/>
            <person name="Kreft J."/>
            <person name="Kuhn M."/>
            <person name="Kunst F."/>
            <person name="Kurapkat G."/>
            <person name="Madueno E."/>
            <person name="Maitournam A."/>
            <person name="Mata Vicente J."/>
            <person name="Ng E."/>
            <person name="Nedjari H."/>
            <person name="Nordsiek G."/>
            <person name="Novella S."/>
            <person name="de Pablos B."/>
            <person name="Perez-Diaz J.-C."/>
            <person name="Purcell R."/>
            <person name="Remmel B."/>
            <person name="Rose M."/>
            <person name="Schlueter T."/>
            <person name="Simoes N."/>
            <person name="Tierrez A."/>
            <person name="Vazquez-Boland J.-A."/>
            <person name="Voss H."/>
            <person name="Wehland J."/>
            <person name="Cossart P."/>
        </authorList>
    </citation>
    <scope>NUCLEOTIDE SEQUENCE [LARGE SCALE GENOMIC DNA]</scope>
    <source>
        <strain>ATCC BAA-679 / EGD-e</strain>
    </source>
</reference>